<dbReference type="EMBL" id="CP000672">
    <property type="protein sequence ID" value="ABR00145.1"/>
    <property type="molecule type" value="Genomic_DNA"/>
</dbReference>
<dbReference type="SMR" id="A5UH89"/>
<dbReference type="KEGG" id="hiq:CGSHiGG_06210"/>
<dbReference type="HOGENOM" id="CLU_095787_0_0_6"/>
<dbReference type="Proteomes" id="UP000001990">
    <property type="component" value="Chromosome"/>
</dbReference>
<dbReference type="GO" id="GO:0005886">
    <property type="term" value="C:plasma membrane"/>
    <property type="evidence" value="ECO:0007669"/>
    <property type="project" value="UniProtKB-SubCell"/>
</dbReference>
<dbReference type="GO" id="GO:0008381">
    <property type="term" value="F:mechanosensitive monoatomic ion channel activity"/>
    <property type="evidence" value="ECO:0007669"/>
    <property type="project" value="UniProtKB-UniRule"/>
</dbReference>
<dbReference type="FunFam" id="1.10.1200.120:FF:000001">
    <property type="entry name" value="Large-conductance mechanosensitive channel"/>
    <property type="match status" value="1"/>
</dbReference>
<dbReference type="Gene3D" id="1.10.1200.120">
    <property type="entry name" value="Large-conductance mechanosensitive channel, MscL, domain 1"/>
    <property type="match status" value="1"/>
</dbReference>
<dbReference type="HAMAP" id="MF_00115">
    <property type="entry name" value="MscL"/>
    <property type="match status" value="1"/>
</dbReference>
<dbReference type="InterPro" id="IPR019823">
    <property type="entry name" value="Mechanosensitive_channel_CS"/>
</dbReference>
<dbReference type="InterPro" id="IPR001185">
    <property type="entry name" value="MS_channel"/>
</dbReference>
<dbReference type="InterPro" id="IPR037673">
    <property type="entry name" value="MSC/AndL"/>
</dbReference>
<dbReference type="InterPro" id="IPR036019">
    <property type="entry name" value="MscL_channel"/>
</dbReference>
<dbReference type="NCBIfam" id="TIGR00220">
    <property type="entry name" value="mscL"/>
    <property type="match status" value="1"/>
</dbReference>
<dbReference type="NCBIfam" id="NF001843">
    <property type="entry name" value="PRK00567.1-4"/>
    <property type="match status" value="1"/>
</dbReference>
<dbReference type="PANTHER" id="PTHR30266:SF2">
    <property type="entry name" value="LARGE-CONDUCTANCE MECHANOSENSITIVE CHANNEL"/>
    <property type="match status" value="1"/>
</dbReference>
<dbReference type="PANTHER" id="PTHR30266">
    <property type="entry name" value="MECHANOSENSITIVE CHANNEL MSCL"/>
    <property type="match status" value="1"/>
</dbReference>
<dbReference type="Pfam" id="PF01741">
    <property type="entry name" value="MscL"/>
    <property type="match status" value="1"/>
</dbReference>
<dbReference type="PRINTS" id="PR01264">
    <property type="entry name" value="MECHCHANNEL"/>
</dbReference>
<dbReference type="SUPFAM" id="SSF81330">
    <property type="entry name" value="Gated mechanosensitive channel"/>
    <property type="match status" value="1"/>
</dbReference>
<dbReference type="PROSITE" id="PS01327">
    <property type="entry name" value="MSCL"/>
    <property type="match status" value="1"/>
</dbReference>
<accession>A5UH89</accession>
<protein>
    <recommendedName>
        <fullName evidence="1">Large-conductance mechanosensitive channel</fullName>
    </recommendedName>
</protein>
<reference key="1">
    <citation type="journal article" date="2007" name="Genome Biol.">
        <title>Characterization and modeling of the Haemophilus influenzae core and supragenomes based on the complete genomic sequences of Rd and 12 clinical nontypeable strains.</title>
        <authorList>
            <person name="Hogg J.S."/>
            <person name="Hu F.Z."/>
            <person name="Janto B."/>
            <person name="Boissy R."/>
            <person name="Hayes J."/>
            <person name="Keefe R."/>
            <person name="Post J.C."/>
            <person name="Ehrlich G.D."/>
        </authorList>
    </citation>
    <scope>NUCLEOTIDE SEQUENCE [LARGE SCALE GENOMIC DNA]</scope>
    <source>
        <strain>PittGG</strain>
    </source>
</reference>
<organism>
    <name type="scientific">Haemophilus influenzae (strain PittGG)</name>
    <dbReference type="NCBI Taxonomy" id="374931"/>
    <lineage>
        <taxon>Bacteria</taxon>
        <taxon>Pseudomonadati</taxon>
        <taxon>Pseudomonadota</taxon>
        <taxon>Gammaproteobacteria</taxon>
        <taxon>Pasteurellales</taxon>
        <taxon>Pasteurellaceae</taxon>
        <taxon>Haemophilus</taxon>
    </lineage>
</organism>
<feature type="chain" id="PRO_1000015382" description="Large-conductance mechanosensitive channel">
    <location>
        <begin position="1"/>
        <end position="128"/>
    </location>
</feature>
<feature type="transmembrane region" description="Helical" evidence="1">
    <location>
        <begin position="10"/>
        <end position="30"/>
    </location>
</feature>
<feature type="transmembrane region" description="Helical" evidence="1">
    <location>
        <begin position="76"/>
        <end position="96"/>
    </location>
</feature>
<sequence length="128" mass="14212">MNFIKEFREFAMRGNVVDMAIGVIIGSAFGKIVSSLVSDIFTPVLGILTGGIDFKDMKFVLAQAQGDVPAVTLNYGLFIQNVIDFIIIAFAIFMMIKVINKVRKPEEKKTAPKAETLLTEIRDLLKNK</sequence>
<evidence type="ECO:0000255" key="1">
    <source>
        <dbReference type="HAMAP-Rule" id="MF_00115"/>
    </source>
</evidence>
<comment type="function">
    <text evidence="1">Channel that opens in response to stretch forces in the membrane lipid bilayer. May participate in the regulation of osmotic pressure changes within the cell.</text>
</comment>
<comment type="subunit">
    <text evidence="1">Homopentamer.</text>
</comment>
<comment type="subcellular location">
    <subcellularLocation>
        <location evidence="1">Cell inner membrane</location>
        <topology evidence="1">Multi-pass membrane protein</topology>
    </subcellularLocation>
</comment>
<comment type="similarity">
    <text evidence="1">Belongs to the MscL family.</text>
</comment>
<gene>
    <name evidence="1" type="primary">mscL</name>
    <name type="ordered locus">CGSHiGG_06210</name>
</gene>
<proteinExistence type="inferred from homology"/>
<keyword id="KW-0997">Cell inner membrane</keyword>
<keyword id="KW-1003">Cell membrane</keyword>
<keyword id="KW-0407">Ion channel</keyword>
<keyword id="KW-0406">Ion transport</keyword>
<keyword id="KW-0472">Membrane</keyword>
<keyword id="KW-0812">Transmembrane</keyword>
<keyword id="KW-1133">Transmembrane helix</keyword>
<keyword id="KW-0813">Transport</keyword>
<name>MSCL_HAEIG</name>